<accession>Q4U3L0</accession>
<proteinExistence type="evidence at transcript level"/>
<dbReference type="EC" id="1.2.1.12"/>
<dbReference type="EMBL" id="DQ016434">
    <property type="protein sequence ID" value="AAY41178.1"/>
    <property type="molecule type" value="mRNA"/>
</dbReference>
<dbReference type="SMR" id="Q4U3L0"/>
<dbReference type="STRING" id="37546.Q4U3L0"/>
<dbReference type="EnsemblMetazoa" id="GMOY000473-RA">
    <property type="protein sequence ID" value="GMOY000473-PA"/>
    <property type="gene ID" value="GMOY000473"/>
</dbReference>
<dbReference type="VEuPathDB" id="VectorBase:GMOY000473"/>
<dbReference type="PhylomeDB" id="Q4U3L0"/>
<dbReference type="UniPathway" id="UPA00109">
    <property type="reaction ID" value="UER00184"/>
</dbReference>
<dbReference type="Proteomes" id="UP000092444">
    <property type="component" value="Unassembled WGS sequence"/>
</dbReference>
<dbReference type="GO" id="GO:0005737">
    <property type="term" value="C:cytoplasm"/>
    <property type="evidence" value="ECO:0000250"/>
    <property type="project" value="UniProtKB"/>
</dbReference>
<dbReference type="GO" id="GO:0005829">
    <property type="term" value="C:cytosol"/>
    <property type="evidence" value="ECO:0007669"/>
    <property type="project" value="TreeGrafter"/>
</dbReference>
<dbReference type="GO" id="GO:0015630">
    <property type="term" value="C:microtubule cytoskeleton"/>
    <property type="evidence" value="ECO:0000250"/>
    <property type="project" value="UniProtKB"/>
</dbReference>
<dbReference type="GO" id="GO:0004365">
    <property type="term" value="F:glyceraldehyde-3-phosphate dehydrogenase (NAD+) (phosphorylating) activity"/>
    <property type="evidence" value="ECO:0007669"/>
    <property type="project" value="UniProtKB-EC"/>
</dbReference>
<dbReference type="GO" id="GO:0051287">
    <property type="term" value="F:NAD binding"/>
    <property type="evidence" value="ECO:0007669"/>
    <property type="project" value="InterPro"/>
</dbReference>
<dbReference type="GO" id="GO:0050661">
    <property type="term" value="F:NADP binding"/>
    <property type="evidence" value="ECO:0007669"/>
    <property type="project" value="InterPro"/>
</dbReference>
<dbReference type="GO" id="GO:0006006">
    <property type="term" value="P:glucose metabolic process"/>
    <property type="evidence" value="ECO:0007669"/>
    <property type="project" value="InterPro"/>
</dbReference>
<dbReference type="GO" id="GO:0006096">
    <property type="term" value="P:glycolytic process"/>
    <property type="evidence" value="ECO:0007669"/>
    <property type="project" value="UniProtKB-UniPathway"/>
</dbReference>
<dbReference type="CDD" id="cd18126">
    <property type="entry name" value="GAPDH_I_C"/>
    <property type="match status" value="1"/>
</dbReference>
<dbReference type="CDD" id="cd05214">
    <property type="entry name" value="GAPDH_I_N"/>
    <property type="match status" value="1"/>
</dbReference>
<dbReference type="FunFam" id="3.30.360.10:FF:000001">
    <property type="entry name" value="Glyceraldehyde-3-phosphate dehydrogenase"/>
    <property type="match status" value="1"/>
</dbReference>
<dbReference type="FunFam" id="3.40.50.720:FF:000266">
    <property type="entry name" value="Glyceraldehyde-3-phosphate dehydrogenase"/>
    <property type="match status" value="1"/>
</dbReference>
<dbReference type="Gene3D" id="3.30.360.10">
    <property type="entry name" value="Dihydrodipicolinate Reductase, domain 2"/>
    <property type="match status" value="1"/>
</dbReference>
<dbReference type="Gene3D" id="3.40.50.720">
    <property type="entry name" value="NAD(P)-binding Rossmann-like Domain"/>
    <property type="match status" value="1"/>
</dbReference>
<dbReference type="InterPro" id="IPR020831">
    <property type="entry name" value="GlycerAld/Erythrose_P_DH"/>
</dbReference>
<dbReference type="InterPro" id="IPR020830">
    <property type="entry name" value="GlycerAld_3-P_DH_AS"/>
</dbReference>
<dbReference type="InterPro" id="IPR020829">
    <property type="entry name" value="GlycerAld_3-P_DH_cat"/>
</dbReference>
<dbReference type="InterPro" id="IPR020828">
    <property type="entry name" value="GlycerAld_3-P_DH_NAD(P)-bd"/>
</dbReference>
<dbReference type="InterPro" id="IPR006424">
    <property type="entry name" value="Glyceraldehyde-3-P_DH_1"/>
</dbReference>
<dbReference type="InterPro" id="IPR036291">
    <property type="entry name" value="NAD(P)-bd_dom_sf"/>
</dbReference>
<dbReference type="NCBIfam" id="TIGR01534">
    <property type="entry name" value="GAPDH-I"/>
    <property type="match status" value="1"/>
</dbReference>
<dbReference type="PANTHER" id="PTHR10836">
    <property type="entry name" value="GLYCERALDEHYDE 3-PHOSPHATE DEHYDROGENASE"/>
    <property type="match status" value="1"/>
</dbReference>
<dbReference type="PANTHER" id="PTHR10836:SF76">
    <property type="entry name" value="GLYCERALDEHYDE-3-PHOSPHATE DEHYDROGENASE-RELATED"/>
    <property type="match status" value="1"/>
</dbReference>
<dbReference type="Pfam" id="PF02800">
    <property type="entry name" value="Gp_dh_C"/>
    <property type="match status" value="1"/>
</dbReference>
<dbReference type="Pfam" id="PF00044">
    <property type="entry name" value="Gp_dh_N"/>
    <property type="match status" value="1"/>
</dbReference>
<dbReference type="PIRSF" id="PIRSF000149">
    <property type="entry name" value="GAP_DH"/>
    <property type="match status" value="1"/>
</dbReference>
<dbReference type="PRINTS" id="PR00078">
    <property type="entry name" value="G3PDHDRGNASE"/>
</dbReference>
<dbReference type="SMART" id="SM00846">
    <property type="entry name" value="Gp_dh_N"/>
    <property type="match status" value="1"/>
</dbReference>
<dbReference type="SUPFAM" id="SSF55347">
    <property type="entry name" value="Glyceraldehyde-3-phosphate dehydrogenase-like, C-terminal domain"/>
    <property type="match status" value="1"/>
</dbReference>
<dbReference type="SUPFAM" id="SSF51735">
    <property type="entry name" value="NAD(P)-binding Rossmann-fold domains"/>
    <property type="match status" value="1"/>
</dbReference>
<dbReference type="PROSITE" id="PS00071">
    <property type="entry name" value="GAPDH"/>
    <property type="match status" value="1"/>
</dbReference>
<comment type="catalytic activity">
    <reaction evidence="2">
        <text>D-glyceraldehyde 3-phosphate + phosphate + NAD(+) = (2R)-3-phospho-glyceroyl phosphate + NADH + H(+)</text>
        <dbReference type="Rhea" id="RHEA:10300"/>
        <dbReference type="ChEBI" id="CHEBI:15378"/>
        <dbReference type="ChEBI" id="CHEBI:43474"/>
        <dbReference type="ChEBI" id="CHEBI:57540"/>
        <dbReference type="ChEBI" id="CHEBI:57604"/>
        <dbReference type="ChEBI" id="CHEBI:57945"/>
        <dbReference type="ChEBI" id="CHEBI:59776"/>
        <dbReference type="EC" id="1.2.1.12"/>
    </reaction>
</comment>
<comment type="pathway">
    <text>Carbohydrate degradation; glycolysis; pyruvate from D-glyceraldehyde 3-phosphate: step 1/5.</text>
</comment>
<comment type="subunit">
    <text evidence="1">Homotetramer.</text>
</comment>
<comment type="subcellular location">
    <subcellularLocation>
        <location evidence="1">Cytoplasm</location>
    </subcellularLocation>
</comment>
<comment type="similarity">
    <text evidence="3">Belongs to the glyceraldehyde-3-phosphate dehydrogenase family.</text>
</comment>
<protein>
    <recommendedName>
        <fullName>Glyceraldehyde-3-phosphate dehydrogenase</fullName>
        <shortName>GAPDH</shortName>
        <ecNumber>1.2.1.12</ecNumber>
    </recommendedName>
</protein>
<feature type="chain" id="PRO_0000291647" description="Glyceraldehyde-3-phosphate dehydrogenase">
    <location>
        <begin position="1"/>
        <end position="333"/>
    </location>
</feature>
<feature type="active site" description="Nucleophile" evidence="2">
    <location>
        <position position="149"/>
    </location>
</feature>
<feature type="binding site" evidence="1">
    <location>
        <begin position="11"/>
        <end position="12"/>
    </location>
    <ligand>
        <name>NAD(+)</name>
        <dbReference type="ChEBI" id="CHEBI:57540"/>
    </ligand>
</feature>
<feature type="binding site" evidence="1">
    <location>
        <position position="32"/>
    </location>
    <ligand>
        <name>NAD(+)</name>
        <dbReference type="ChEBI" id="CHEBI:57540"/>
    </ligand>
</feature>
<feature type="binding site" evidence="1">
    <location>
        <position position="77"/>
    </location>
    <ligand>
        <name>NAD(+)</name>
        <dbReference type="ChEBI" id="CHEBI:57540"/>
    </ligand>
</feature>
<feature type="binding site" evidence="1">
    <location>
        <begin position="148"/>
        <end position="150"/>
    </location>
    <ligand>
        <name>D-glyceraldehyde 3-phosphate</name>
        <dbReference type="ChEBI" id="CHEBI:59776"/>
    </ligand>
</feature>
<feature type="binding site" evidence="1">
    <location>
        <position position="179"/>
    </location>
    <ligand>
        <name>D-glyceraldehyde 3-phosphate</name>
        <dbReference type="ChEBI" id="CHEBI:59776"/>
    </ligand>
</feature>
<feature type="binding site" evidence="1">
    <location>
        <begin position="208"/>
        <end position="209"/>
    </location>
    <ligand>
        <name>D-glyceraldehyde 3-phosphate</name>
        <dbReference type="ChEBI" id="CHEBI:59776"/>
    </ligand>
</feature>
<feature type="binding site" evidence="1">
    <location>
        <position position="231"/>
    </location>
    <ligand>
        <name>D-glyceraldehyde 3-phosphate</name>
        <dbReference type="ChEBI" id="CHEBI:59776"/>
    </ligand>
</feature>
<feature type="binding site" evidence="1">
    <location>
        <position position="313"/>
    </location>
    <ligand>
        <name>NAD(+)</name>
        <dbReference type="ChEBI" id="CHEBI:57540"/>
    </ligand>
</feature>
<feature type="site" description="Activates thiol group during catalysis" evidence="1">
    <location>
        <position position="176"/>
    </location>
</feature>
<keyword id="KW-0963">Cytoplasm</keyword>
<keyword id="KW-0324">Glycolysis</keyword>
<keyword id="KW-0520">NAD</keyword>
<keyword id="KW-0560">Oxidoreductase</keyword>
<organism>
    <name type="scientific">Glossina morsitans morsitans</name>
    <name type="common">Savannah tsetse fly</name>
    <dbReference type="NCBI Taxonomy" id="37546"/>
    <lineage>
        <taxon>Eukaryota</taxon>
        <taxon>Metazoa</taxon>
        <taxon>Ecdysozoa</taxon>
        <taxon>Arthropoda</taxon>
        <taxon>Hexapoda</taxon>
        <taxon>Insecta</taxon>
        <taxon>Pterygota</taxon>
        <taxon>Neoptera</taxon>
        <taxon>Endopterygota</taxon>
        <taxon>Diptera</taxon>
        <taxon>Brachycera</taxon>
        <taxon>Muscomorpha</taxon>
        <taxon>Hippoboscoidea</taxon>
        <taxon>Glossinidae</taxon>
        <taxon>Glossina</taxon>
    </lineage>
</organism>
<evidence type="ECO:0000250" key="1"/>
<evidence type="ECO:0000255" key="2">
    <source>
        <dbReference type="PROSITE-ProRule" id="PRU10009"/>
    </source>
</evidence>
<evidence type="ECO:0000305" key="3"/>
<reference key="1">
    <citation type="journal article" date="2006" name="Mol. Microbiol.">
        <title>Innate immune responses regulate trypanosome parasite infection of the tsetse fly Glossina morsitans morsitans.</title>
        <authorList>
            <person name="Hu C."/>
            <person name="Aksoy S."/>
        </authorList>
    </citation>
    <scope>NUCLEOTIDE SEQUENCE [MRNA]</scope>
</reference>
<gene>
    <name type="primary">Gapdh</name>
</gene>
<name>G3P_GLOMM</name>
<sequence length="333" mass="35663">MSKIGINGFGRIGRLVLRAALDKGAEVVAVNDPFIDVNYMVYLFKYDSTHGRFKGTVAADGGFLVVNGKKITVFCERDPTNINWASAGAEYIVESTGVFTTIDKASAHFKGGAKKVVISAPSADAPMFVCGVNLEAYSPDMKVVSNASCTTNCLAPLAKVIHDNFEIVEGLMTTVHATTATQKTVDGPSGKLWRDGRGAAQNIIPASTGAAKAVGKVIPELNGKLTGMAFRVPTPNVSVVDLTVRLGKSATYDEIKAKVLEASQGPMKGILDYTEEEVVSTDFVGDTHSSVFDAKAGIPLNDKFVKLISWYDNEFGYSNRVIDLIKYMQSKDA</sequence>